<dbReference type="EC" id="6.1.1.5" evidence="1"/>
<dbReference type="EMBL" id="AM263198">
    <property type="protein sequence ID" value="CAK21457.1"/>
    <property type="molecule type" value="Genomic_DNA"/>
</dbReference>
<dbReference type="RefSeq" id="WP_011702803.1">
    <property type="nucleotide sequence ID" value="NC_008555.1"/>
</dbReference>
<dbReference type="SMR" id="A0AKC5"/>
<dbReference type="STRING" id="386043.lwe2039"/>
<dbReference type="GeneID" id="61189939"/>
<dbReference type="KEGG" id="lwe:lwe2039"/>
<dbReference type="eggNOG" id="COG0060">
    <property type="taxonomic scope" value="Bacteria"/>
</dbReference>
<dbReference type="HOGENOM" id="CLU_001493_7_1_9"/>
<dbReference type="OrthoDB" id="9810365at2"/>
<dbReference type="Proteomes" id="UP000000779">
    <property type="component" value="Chromosome"/>
</dbReference>
<dbReference type="GO" id="GO:0005829">
    <property type="term" value="C:cytosol"/>
    <property type="evidence" value="ECO:0007669"/>
    <property type="project" value="TreeGrafter"/>
</dbReference>
<dbReference type="GO" id="GO:0002161">
    <property type="term" value="F:aminoacyl-tRNA deacylase activity"/>
    <property type="evidence" value="ECO:0007669"/>
    <property type="project" value="InterPro"/>
</dbReference>
<dbReference type="GO" id="GO:0005524">
    <property type="term" value="F:ATP binding"/>
    <property type="evidence" value="ECO:0007669"/>
    <property type="project" value="UniProtKB-UniRule"/>
</dbReference>
<dbReference type="GO" id="GO:0004822">
    <property type="term" value="F:isoleucine-tRNA ligase activity"/>
    <property type="evidence" value="ECO:0007669"/>
    <property type="project" value="UniProtKB-UniRule"/>
</dbReference>
<dbReference type="GO" id="GO:0000049">
    <property type="term" value="F:tRNA binding"/>
    <property type="evidence" value="ECO:0007669"/>
    <property type="project" value="InterPro"/>
</dbReference>
<dbReference type="GO" id="GO:0008270">
    <property type="term" value="F:zinc ion binding"/>
    <property type="evidence" value="ECO:0007669"/>
    <property type="project" value="UniProtKB-UniRule"/>
</dbReference>
<dbReference type="GO" id="GO:0006428">
    <property type="term" value="P:isoleucyl-tRNA aminoacylation"/>
    <property type="evidence" value="ECO:0007669"/>
    <property type="project" value="UniProtKB-UniRule"/>
</dbReference>
<dbReference type="CDD" id="cd07960">
    <property type="entry name" value="Anticodon_Ia_Ile_BEm"/>
    <property type="match status" value="1"/>
</dbReference>
<dbReference type="CDD" id="cd00818">
    <property type="entry name" value="IleRS_core"/>
    <property type="match status" value="1"/>
</dbReference>
<dbReference type="FunFam" id="1.10.10.830:FF:000001">
    <property type="entry name" value="Isoleucine--tRNA ligase"/>
    <property type="match status" value="1"/>
</dbReference>
<dbReference type="FunFam" id="1.10.730.20:FF:000001">
    <property type="entry name" value="Isoleucine--tRNA ligase"/>
    <property type="match status" value="1"/>
</dbReference>
<dbReference type="FunFam" id="3.40.50.620:FF:000152">
    <property type="entry name" value="Isoleucine--tRNA ligase"/>
    <property type="match status" value="1"/>
</dbReference>
<dbReference type="FunFam" id="3.90.740.10:FF:000006">
    <property type="entry name" value="Isoleucine--tRNA ligase"/>
    <property type="match status" value="1"/>
</dbReference>
<dbReference type="Gene3D" id="1.10.730.20">
    <property type="match status" value="1"/>
</dbReference>
<dbReference type="Gene3D" id="3.40.50.620">
    <property type="entry name" value="HUPs"/>
    <property type="match status" value="2"/>
</dbReference>
<dbReference type="Gene3D" id="1.10.10.830">
    <property type="entry name" value="Ile-tRNA synthetase CP2 domain-like"/>
    <property type="match status" value="1"/>
</dbReference>
<dbReference type="Gene3D" id="3.90.740.10">
    <property type="entry name" value="Valyl/Leucyl/Isoleucyl-tRNA synthetase, editing domain"/>
    <property type="match status" value="1"/>
</dbReference>
<dbReference type="HAMAP" id="MF_02002">
    <property type="entry name" value="Ile_tRNA_synth_type1"/>
    <property type="match status" value="1"/>
</dbReference>
<dbReference type="InterPro" id="IPR001412">
    <property type="entry name" value="aa-tRNA-synth_I_CS"/>
</dbReference>
<dbReference type="InterPro" id="IPR002300">
    <property type="entry name" value="aa-tRNA-synth_Ia"/>
</dbReference>
<dbReference type="InterPro" id="IPR033708">
    <property type="entry name" value="Anticodon_Ile_BEm"/>
</dbReference>
<dbReference type="InterPro" id="IPR002301">
    <property type="entry name" value="Ile-tRNA-ligase"/>
</dbReference>
<dbReference type="InterPro" id="IPR023585">
    <property type="entry name" value="Ile-tRNA-ligase_type1"/>
</dbReference>
<dbReference type="InterPro" id="IPR050081">
    <property type="entry name" value="Ile-tRNA_ligase"/>
</dbReference>
<dbReference type="InterPro" id="IPR013155">
    <property type="entry name" value="M/V/L/I-tRNA-synth_anticd-bd"/>
</dbReference>
<dbReference type="InterPro" id="IPR014729">
    <property type="entry name" value="Rossmann-like_a/b/a_fold"/>
</dbReference>
<dbReference type="InterPro" id="IPR009080">
    <property type="entry name" value="tRNAsynth_Ia_anticodon-bd"/>
</dbReference>
<dbReference type="InterPro" id="IPR009008">
    <property type="entry name" value="Val/Leu/Ile-tRNA-synth_edit"/>
</dbReference>
<dbReference type="InterPro" id="IPR010663">
    <property type="entry name" value="Znf_FPG/IleRS"/>
</dbReference>
<dbReference type="NCBIfam" id="TIGR00392">
    <property type="entry name" value="ileS"/>
    <property type="match status" value="1"/>
</dbReference>
<dbReference type="PANTHER" id="PTHR42765:SF1">
    <property type="entry name" value="ISOLEUCINE--TRNA LIGASE, MITOCHONDRIAL"/>
    <property type="match status" value="1"/>
</dbReference>
<dbReference type="PANTHER" id="PTHR42765">
    <property type="entry name" value="SOLEUCYL-TRNA SYNTHETASE"/>
    <property type="match status" value="1"/>
</dbReference>
<dbReference type="Pfam" id="PF08264">
    <property type="entry name" value="Anticodon_1"/>
    <property type="match status" value="1"/>
</dbReference>
<dbReference type="Pfam" id="PF00133">
    <property type="entry name" value="tRNA-synt_1"/>
    <property type="match status" value="1"/>
</dbReference>
<dbReference type="Pfam" id="PF06827">
    <property type="entry name" value="zf-FPG_IleRS"/>
    <property type="match status" value="1"/>
</dbReference>
<dbReference type="PRINTS" id="PR00984">
    <property type="entry name" value="TRNASYNTHILE"/>
</dbReference>
<dbReference type="SUPFAM" id="SSF47323">
    <property type="entry name" value="Anticodon-binding domain of a subclass of class I aminoacyl-tRNA synthetases"/>
    <property type="match status" value="1"/>
</dbReference>
<dbReference type="SUPFAM" id="SSF52374">
    <property type="entry name" value="Nucleotidylyl transferase"/>
    <property type="match status" value="1"/>
</dbReference>
<dbReference type="SUPFAM" id="SSF50677">
    <property type="entry name" value="ValRS/IleRS/LeuRS editing domain"/>
    <property type="match status" value="1"/>
</dbReference>
<dbReference type="PROSITE" id="PS00178">
    <property type="entry name" value="AA_TRNA_LIGASE_I"/>
    <property type="match status" value="1"/>
</dbReference>
<feature type="chain" id="PRO_1000022090" description="Isoleucine--tRNA ligase">
    <location>
        <begin position="1"/>
        <end position="921"/>
    </location>
</feature>
<feature type="short sequence motif" description="'HIGH' region">
    <location>
        <begin position="57"/>
        <end position="67"/>
    </location>
</feature>
<feature type="short sequence motif" description="'KMSKS' region">
    <location>
        <begin position="593"/>
        <end position="597"/>
    </location>
</feature>
<feature type="binding site" evidence="1">
    <location>
        <position position="552"/>
    </location>
    <ligand>
        <name>L-isoleucyl-5'-AMP</name>
        <dbReference type="ChEBI" id="CHEBI:178002"/>
    </ligand>
</feature>
<feature type="binding site" evidence="1">
    <location>
        <position position="596"/>
    </location>
    <ligand>
        <name>ATP</name>
        <dbReference type="ChEBI" id="CHEBI:30616"/>
    </ligand>
</feature>
<feature type="binding site" evidence="1">
    <location>
        <position position="888"/>
    </location>
    <ligand>
        <name>Zn(2+)</name>
        <dbReference type="ChEBI" id="CHEBI:29105"/>
    </ligand>
</feature>
<feature type="binding site" evidence="1">
    <location>
        <position position="891"/>
    </location>
    <ligand>
        <name>Zn(2+)</name>
        <dbReference type="ChEBI" id="CHEBI:29105"/>
    </ligand>
</feature>
<feature type="binding site" evidence="1">
    <location>
        <position position="908"/>
    </location>
    <ligand>
        <name>Zn(2+)</name>
        <dbReference type="ChEBI" id="CHEBI:29105"/>
    </ligand>
</feature>
<feature type="binding site" evidence="1">
    <location>
        <position position="911"/>
    </location>
    <ligand>
        <name>Zn(2+)</name>
        <dbReference type="ChEBI" id="CHEBI:29105"/>
    </ligand>
</feature>
<comment type="function">
    <text evidence="1">Catalyzes the attachment of isoleucine to tRNA(Ile). As IleRS can inadvertently accommodate and process structurally similar amino acids such as valine, to avoid such errors it has two additional distinct tRNA(Ile)-dependent editing activities. One activity is designated as 'pretransfer' editing and involves the hydrolysis of activated Val-AMP. The other activity is designated 'posttransfer' editing and involves deacylation of mischarged Val-tRNA(Ile).</text>
</comment>
<comment type="catalytic activity">
    <reaction evidence="1">
        <text>tRNA(Ile) + L-isoleucine + ATP = L-isoleucyl-tRNA(Ile) + AMP + diphosphate</text>
        <dbReference type="Rhea" id="RHEA:11060"/>
        <dbReference type="Rhea" id="RHEA-COMP:9666"/>
        <dbReference type="Rhea" id="RHEA-COMP:9695"/>
        <dbReference type="ChEBI" id="CHEBI:30616"/>
        <dbReference type="ChEBI" id="CHEBI:33019"/>
        <dbReference type="ChEBI" id="CHEBI:58045"/>
        <dbReference type="ChEBI" id="CHEBI:78442"/>
        <dbReference type="ChEBI" id="CHEBI:78528"/>
        <dbReference type="ChEBI" id="CHEBI:456215"/>
        <dbReference type="EC" id="6.1.1.5"/>
    </reaction>
</comment>
<comment type="cofactor">
    <cofactor evidence="1">
        <name>Zn(2+)</name>
        <dbReference type="ChEBI" id="CHEBI:29105"/>
    </cofactor>
    <text evidence="1">Binds 1 zinc ion per subunit.</text>
</comment>
<comment type="subunit">
    <text evidence="1">Monomer.</text>
</comment>
<comment type="subcellular location">
    <subcellularLocation>
        <location evidence="1">Cytoplasm</location>
    </subcellularLocation>
</comment>
<comment type="domain">
    <text evidence="1">IleRS has two distinct active sites: one for aminoacylation and one for editing. The misactivated valine is translocated from the active site to the editing site, which sterically excludes the correctly activated isoleucine. The single editing site contains two valyl binding pockets, one specific for each substrate (Val-AMP or Val-tRNA(Ile)).</text>
</comment>
<comment type="similarity">
    <text evidence="1">Belongs to the class-I aminoacyl-tRNA synthetase family. IleS type 1 subfamily.</text>
</comment>
<sequence length="921" mass="103975">MEYKDTLLMPKTDFPMRGNLPNKEPEWQAKWEEEKLYEKIQEKNTGRKAYILHDGPPYANGELHMGHALNKTIKDIIVRYKSMAGFSSPYVPGWDTHGLPIETAIAKKGVKRKEMSIAEFRKLCAEYAMTQVDGQRTGFKRLGINGDWENPYITLLPEYEAEQIKVFGEMAKKGYIYKGKKPVYWSPSSESALAEAEIEYQDKKSASIFVAFKVTDGKGVLDEGTNIVIWTTTPWTIPANMGITVNPDLDYVVIESAGEKYVVAEALLPNLREKLGFEDATVVKTVRGSELDRIVTKHPFYDRDSLVMNGEHATAEAGTGAVHTAPGHGEDDFLIGKKYDLEILAPLDDRGVFTDEAPGFEGVFYDTANKMVTEKLEEVGALLKMEFITHSYPHDWRTKKPVIFRATAQWFASIDAFRDDLLKAVKGVNWTPAWGETRLFNMVRDRGDWVISRQRAWGVPLPIFYAENGEAIITDETINHISELFREHGSNVWFERDVKDLLPDGFTHPGSPNGEFTKETDIMDVWFDSGSSHQAVLNARPELTRPADLYMEGSDQYRGWFNSSLTTAVAITGEAPYRNVLSHGFALDGEGRKMSKSLGNTLLPGKVIKQLGADIVRLWVASVDYQADVRVSDEILKQVSEVYRKIRNTMRFLLGNINDFNPTTNTVSYENLREVDKYMLIKLNDLVKNVKDSYEAFEFSTIYHQINNFCTVELSQFYMDFAKDVVYIEAADSNDRRAMQTVFYEAAVTLTKLLAPILPHTTEEVWNSLIGEGAESIHLQDLPDVKVLADSEEITAKWDAFMQIRDNVQKALEFARNEKLIGKSMLAKVTLYVDGEAKTLFDSLEGDFAQLFIVSDFELVEGLENAPESAFKSNQVAVQITVAEGETCERCRVVKKDVGVDPKHPTLCGRCADIVVKHYEA</sequence>
<organism>
    <name type="scientific">Listeria welshimeri serovar 6b (strain ATCC 35897 / DSM 20650 / CCUG 15529 / CIP 8149 / NCTC 11857 / SLCC 5334 / V8)</name>
    <dbReference type="NCBI Taxonomy" id="386043"/>
    <lineage>
        <taxon>Bacteria</taxon>
        <taxon>Bacillati</taxon>
        <taxon>Bacillota</taxon>
        <taxon>Bacilli</taxon>
        <taxon>Bacillales</taxon>
        <taxon>Listeriaceae</taxon>
        <taxon>Listeria</taxon>
    </lineage>
</organism>
<reference key="1">
    <citation type="journal article" date="2006" name="J. Bacteriol.">
        <title>Whole-genome sequence of Listeria welshimeri reveals common steps in genome reduction with Listeria innocua as compared to Listeria monocytogenes.</title>
        <authorList>
            <person name="Hain T."/>
            <person name="Steinweg C."/>
            <person name="Kuenne C.T."/>
            <person name="Billion A."/>
            <person name="Ghai R."/>
            <person name="Chatterjee S.S."/>
            <person name="Domann E."/>
            <person name="Kaerst U."/>
            <person name="Goesmann A."/>
            <person name="Bekel T."/>
            <person name="Bartels D."/>
            <person name="Kaiser O."/>
            <person name="Meyer F."/>
            <person name="Puehler A."/>
            <person name="Weisshaar B."/>
            <person name="Wehland J."/>
            <person name="Liang C."/>
            <person name="Dandekar T."/>
            <person name="Lampidis R."/>
            <person name="Kreft J."/>
            <person name="Goebel W."/>
            <person name="Chakraborty T."/>
        </authorList>
    </citation>
    <scope>NUCLEOTIDE SEQUENCE [LARGE SCALE GENOMIC DNA]</scope>
    <source>
        <strain>ATCC 35897 / DSM 20650 / CCUG 15529 / CIP 8149 / NCTC 11857 / SLCC 5334 / V8</strain>
    </source>
</reference>
<keyword id="KW-0030">Aminoacyl-tRNA synthetase</keyword>
<keyword id="KW-0067">ATP-binding</keyword>
<keyword id="KW-0963">Cytoplasm</keyword>
<keyword id="KW-0436">Ligase</keyword>
<keyword id="KW-0479">Metal-binding</keyword>
<keyword id="KW-0547">Nucleotide-binding</keyword>
<keyword id="KW-0648">Protein biosynthesis</keyword>
<keyword id="KW-0862">Zinc</keyword>
<proteinExistence type="inferred from homology"/>
<gene>
    <name evidence="1" type="primary">ileS</name>
    <name type="ordered locus">lwe2039</name>
</gene>
<evidence type="ECO:0000255" key="1">
    <source>
        <dbReference type="HAMAP-Rule" id="MF_02002"/>
    </source>
</evidence>
<accession>A0AKC5</accession>
<name>SYI_LISW6</name>
<protein>
    <recommendedName>
        <fullName evidence="1">Isoleucine--tRNA ligase</fullName>
        <ecNumber evidence="1">6.1.1.5</ecNumber>
    </recommendedName>
    <alternativeName>
        <fullName evidence="1">Isoleucyl-tRNA synthetase</fullName>
        <shortName evidence="1">IleRS</shortName>
    </alternativeName>
</protein>